<reference key="1">
    <citation type="journal article" date="2009" name="J. Bacteriol.">
        <title>Complete genome sequence of Erythrobacter litoralis HTCC2594.</title>
        <authorList>
            <person name="Oh H.M."/>
            <person name="Giovannoni S.J."/>
            <person name="Ferriera S."/>
            <person name="Johnson J."/>
            <person name="Cho J.C."/>
        </authorList>
    </citation>
    <scope>NUCLEOTIDE SEQUENCE [LARGE SCALE GENOMIC DNA]</scope>
    <source>
        <strain>HTCC2594</strain>
    </source>
</reference>
<protein>
    <recommendedName>
        <fullName evidence="1">RNA pyrophosphohydrolase</fullName>
        <ecNumber evidence="1">3.6.1.-</ecNumber>
    </recommendedName>
    <alternativeName>
        <fullName evidence="1">(Di)nucleoside polyphosphate hydrolase</fullName>
    </alternativeName>
</protein>
<evidence type="ECO:0000255" key="1">
    <source>
        <dbReference type="HAMAP-Rule" id="MF_00298"/>
    </source>
</evidence>
<organism>
    <name type="scientific">Erythrobacter litoralis (strain HTCC2594)</name>
    <dbReference type="NCBI Taxonomy" id="314225"/>
    <lineage>
        <taxon>Bacteria</taxon>
        <taxon>Pseudomonadati</taxon>
        <taxon>Pseudomonadota</taxon>
        <taxon>Alphaproteobacteria</taxon>
        <taxon>Sphingomonadales</taxon>
        <taxon>Erythrobacteraceae</taxon>
        <taxon>Erythrobacter/Porphyrobacter group</taxon>
        <taxon>Erythrobacter</taxon>
    </lineage>
</organism>
<dbReference type="EC" id="3.6.1.-" evidence="1"/>
<dbReference type="EMBL" id="CP000157">
    <property type="protein sequence ID" value="ABC63508.1"/>
    <property type="molecule type" value="Genomic_DNA"/>
</dbReference>
<dbReference type="RefSeq" id="WP_011414344.1">
    <property type="nucleotide sequence ID" value="NC_007722.1"/>
</dbReference>
<dbReference type="SMR" id="Q2N9Y3"/>
<dbReference type="STRING" id="314225.ELI_07080"/>
<dbReference type="KEGG" id="eli:ELI_07080"/>
<dbReference type="eggNOG" id="COG1051">
    <property type="taxonomic scope" value="Bacteria"/>
</dbReference>
<dbReference type="HOGENOM" id="CLU_087195_3_0_5"/>
<dbReference type="OrthoDB" id="9816040at2"/>
<dbReference type="Proteomes" id="UP000008808">
    <property type="component" value="Chromosome"/>
</dbReference>
<dbReference type="GO" id="GO:0034432">
    <property type="term" value="F:bis(5'-adenosyl)-pentaphosphatase activity"/>
    <property type="evidence" value="ECO:0007669"/>
    <property type="project" value="TreeGrafter"/>
</dbReference>
<dbReference type="GO" id="GO:0008893">
    <property type="term" value="F:guanosine-3',5'-bis(diphosphate) 3'-diphosphatase activity"/>
    <property type="evidence" value="ECO:0007669"/>
    <property type="project" value="TreeGrafter"/>
</dbReference>
<dbReference type="GO" id="GO:0006753">
    <property type="term" value="P:nucleoside phosphate metabolic process"/>
    <property type="evidence" value="ECO:0007669"/>
    <property type="project" value="TreeGrafter"/>
</dbReference>
<dbReference type="GO" id="GO:0019693">
    <property type="term" value="P:ribose phosphate metabolic process"/>
    <property type="evidence" value="ECO:0007669"/>
    <property type="project" value="TreeGrafter"/>
</dbReference>
<dbReference type="CDD" id="cd03671">
    <property type="entry name" value="NUDIX_Ap4A_hydrolase_plant_like"/>
    <property type="match status" value="1"/>
</dbReference>
<dbReference type="Gene3D" id="3.90.79.10">
    <property type="entry name" value="Nucleoside Triphosphate Pyrophosphohydrolase"/>
    <property type="match status" value="1"/>
</dbReference>
<dbReference type="HAMAP" id="MF_00298">
    <property type="entry name" value="Nudix_RppH"/>
    <property type="match status" value="1"/>
</dbReference>
<dbReference type="InterPro" id="IPR020476">
    <property type="entry name" value="Nudix_hydrolase"/>
</dbReference>
<dbReference type="InterPro" id="IPR015797">
    <property type="entry name" value="NUDIX_hydrolase-like_dom_sf"/>
</dbReference>
<dbReference type="InterPro" id="IPR020084">
    <property type="entry name" value="NUDIX_hydrolase_CS"/>
</dbReference>
<dbReference type="InterPro" id="IPR000086">
    <property type="entry name" value="NUDIX_hydrolase_dom"/>
</dbReference>
<dbReference type="InterPro" id="IPR022927">
    <property type="entry name" value="RppH"/>
</dbReference>
<dbReference type="NCBIfam" id="NF001936">
    <property type="entry name" value="PRK00714.1-3"/>
    <property type="match status" value="1"/>
</dbReference>
<dbReference type="NCBIfam" id="NF001938">
    <property type="entry name" value="PRK00714.1-5"/>
    <property type="match status" value="1"/>
</dbReference>
<dbReference type="PANTHER" id="PTHR11839:SF22">
    <property type="entry name" value="NUDIX HYDROLASE 26, CHLOROPLASTIC"/>
    <property type="match status" value="1"/>
</dbReference>
<dbReference type="PANTHER" id="PTHR11839">
    <property type="entry name" value="UDP/ADP-SUGAR PYROPHOSPHATASE"/>
    <property type="match status" value="1"/>
</dbReference>
<dbReference type="Pfam" id="PF00293">
    <property type="entry name" value="NUDIX"/>
    <property type="match status" value="1"/>
</dbReference>
<dbReference type="PRINTS" id="PR00502">
    <property type="entry name" value="NUDIXFAMILY"/>
</dbReference>
<dbReference type="SUPFAM" id="SSF55811">
    <property type="entry name" value="Nudix"/>
    <property type="match status" value="1"/>
</dbReference>
<dbReference type="PROSITE" id="PS51462">
    <property type="entry name" value="NUDIX"/>
    <property type="match status" value="1"/>
</dbReference>
<dbReference type="PROSITE" id="PS00893">
    <property type="entry name" value="NUDIX_BOX"/>
    <property type="match status" value="1"/>
</dbReference>
<proteinExistence type="inferred from homology"/>
<accession>Q2N9Y3</accession>
<feature type="chain" id="PRO_1000078962" description="RNA pyrophosphohydrolase">
    <location>
        <begin position="1"/>
        <end position="164"/>
    </location>
</feature>
<feature type="domain" description="Nudix hydrolase" evidence="1">
    <location>
        <begin position="12"/>
        <end position="158"/>
    </location>
</feature>
<feature type="short sequence motif" description="Nudix box">
    <location>
        <begin position="47"/>
        <end position="68"/>
    </location>
</feature>
<gene>
    <name evidence="1" type="primary">rppH</name>
    <name evidence="1" type="synonym">nudH</name>
    <name type="ordered locus">ELI_07080</name>
</gene>
<comment type="function">
    <text evidence="1">Accelerates the degradation of transcripts by removing pyrophosphate from the 5'-end of triphosphorylated RNA, leading to a more labile monophosphorylated state that can stimulate subsequent ribonuclease cleavage.</text>
</comment>
<comment type="cofactor">
    <cofactor evidence="1">
        <name>a divalent metal cation</name>
        <dbReference type="ChEBI" id="CHEBI:60240"/>
    </cofactor>
</comment>
<comment type="similarity">
    <text evidence="1">Belongs to the Nudix hydrolase family. RppH subfamily.</text>
</comment>
<keyword id="KW-0378">Hydrolase</keyword>
<keyword id="KW-1185">Reference proteome</keyword>
<sequence>MASGSADHEDLRYRQCAGVMLANREGLVFAAQRIDSKNLGAWQMPQGGIDPGETQQEAAMRELEEETGVSADLADVIARMPYPVRYDLPEELQGKLWGGRYRGQEQHWFLARFTGTDADIDIAAHNPPEFSEWKWVEPDELPRLIVPFKREVYRAVVKEFRSLI</sequence>
<name>RPPH_ERYLH</name>